<comment type="function">
    <text evidence="3">Acts antagonistically to MID2 in signaling cell wall stress to the PKC1-MPK1 cell integrity pathway.</text>
</comment>
<comment type="subunit">
    <text evidence="3">Interacts with MID2.</text>
</comment>
<comment type="interaction">
    <interactant intactId="EBI-32089">
        <id>Q08245</id>
    </interactant>
    <interactant intactId="EBI-10901">
        <id>P36027</id>
        <label>MID2</label>
    </interactant>
    <organismsDiffer>false</organismsDiffer>
    <experiments>3</experiments>
</comment>
<comment type="subcellular location">
    <subcellularLocation>
        <location evidence="3">Cell membrane</location>
        <topology evidence="3">Peripheral membrane protein</topology>
    </subcellularLocation>
</comment>
<comment type="PTM">
    <text>Phosphorylation of Ser-25 is induced 2-fold in response to mating pheromone.</text>
</comment>
<feature type="initiator methionine" description="Removed" evidence="4 5">
    <location>
        <position position="1"/>
    </location>
</feature>
<feature type="chain" id="PRO_0000066571" description="Protein ZEO1">
    <location>
        <begin position="2"/>
        <end position="113"/>
    </location>
</feature>
<feature type="region of interest" description="Disordered" evidence="2">
    <location>
        <begin position="1"/>
        <end position="96"/>
    </location>
</feature>
<feature type="coiled-coil region" evidence="1">
    <location>
        <begin position="2"/>
        <end position="97"/>
    </location>
</feature>
<feature type="compositionally biased region" description="Polar residues" evidence="2">
    <location>
        <begin position="1"/>
        <end position="16"/>
    </location>
</feature>
<feature type="compositionally biased region" description="Basic and acidic residues" evidence="2">
    <location>
        <begin position="17"/>
        <end position="37"/>
    </location>
</feature>
<feature type="compositionally biased region" description="Basic and acidic residues" evidence="2">
    <location>
        <begin position="53"/>
        <end position="82"/>
    </location>
</feature>
<feature type="modified residue" description="N-acetylserine" evidence="4 5">
    <location>
        <position position="2"/>
    </location>
</feature>
<feature type="modified residue" description="Phosphoserine" evidence="5">
    <location>
        <position position="2"/>
    </location>
</feature>
<feature type="modified residue" description="Phosphoserine" evidence="5 6 7 8 9 10">
    <location>
        <position position="25"/>
    </location>
</feature>
<feature type="modified residue" description="Phosphoserine" evidence="7 8 9 10">
    <location>
        <position position="40"/>
    </location>
</feature>
<feature type="modified residue" description="Phosphothreonine" evidence="6 7 8 9 10">
    <location>
        <position position="49"/>
    </location>
</feature>
<feature type="cross-link" description="Glycyl lysine isopeptide (Lys-Gly) (interchain with G-Cter in ubiquitin)" evidence="11">
    <location>
        <position position="18"/>
    </location>
</feature>
<feature type="cross-link" description="Glycyl lysine isopeptide (Lys-Gly) (interchain with G-Cter in ubiquitin)" evidence="11">
    <location>
        <position position="23"/>
    </location>
</feature>
<feature type="cross-link" description="Glycyl lysine isopeptide (Lys-Gly) (interchain with G-Cter in ubiquitin)" evidence="11">
    <location>
        <position position="29"/>
    </location>
</feature>
<feature type="cross-link" description="Glycyl lysine isopeptide (Lys-Gly) (interchain with G-Cter in ubiquitin)" evidence="11">
    <location>
        <position position="34"/>
    </location>
</feature>
<feature type="cross-link" description="Glycyl lysine isopeptide (Lys-Gly) (interchain with G-Cter in ubiquitin)" evidence="11">
    <location>
        <position position="45"/>
    </location>
</feature>
<feature type="cross-link" description="Glycyl lysine isopeptide (Lys-Gly) (interchain with G-Cter in ubiquitin)" evidence="11">
    <location>
        <position position="57"/>
    </location>
</feature>
<feature type="cross-link" description="Glycyl lysine isopeptide (Lys-Gly) (interchain with G-Cter in ubiquitin)" evidence="11">
    <location>
        <position position="82"/>
    </location>
</feature>
<organism>
    <name type="scientific">Saccharomyces cerevisiae (strain ATCC 204508 / S288c)</name>
    <name type="common">Baker's yeast</name>
    <dbReference type="NCBI Taxonomy" id="559292"/>
    <lineage>
        <taxon>Eukaryota</taxon>
        <taxon>Fungi</taxon>
        <taxon>Dikarya</taxon>
        <taxon>Ascomycota</taxon>
        <taxon>Saccharomycotina</taxon>
        <taxon>Saccharomycetes</taxon>
        <taxon>Saccharomycetales</taxon>
        <taxon>Saccharomycetaceae</taxon>
        <taxon>Saccharomyces</taxon>
    </lineage>
</organism>
<proteinExistence type="evidence at protein level"/>
<keyword id="KW-0007">Acetylation</keyword>
<keyword id="KW-1003">Cell membrane</keyword>
<keyword id="KW-0175">Coiled coil</keyword>
<keyword id="KW-0903">Direct protein sequencing</keyword>
<keyword id="KW-1017">Isopeptide bond</keyword>
<keyword id="KW-0472">Membrane</keyword>
<keyword id="KW-0597">Phosphoprotein</keyword>
<keyword id="KW-1185">Reference proteome</keyword>
<keyword id="KW-0832">Ubl conjugation</keyword>
<evidence type="ECO:0000255" key="1"/>
<evidence type="ECO:0000256" key="2">
    <source>
        <dbReference type="SAM" id="MobiDB-lite"/>
    </source>
</evidence>
<evidence type="ECO:0000269" key="3">
    <source>
    </source>
</evidence>
<evidence type="ECO:0000269" key="4">
    <source ref="4"/>
</evidence>
<evidence type="ECO:0007744" key="5">
    <source>
    </source>
</evidence>
<evidence type="ECO:0007744" key="6">
    <source>
    </source>
</evidence>
<evidence type="ECO:0007744" key="7">
    <source>
    </source>
</evidence>
<evidence type="ECO:0007744" key="8">
    <source>
    </source>
</evidence>
<evidence type="ECO:0007744" key="9">
    <source>
    </source>
</evidence>
<evidence type="ECO:0007744" key="10">
    <source>
    </source>
</evidence>
<evidence type="ECO:0007744" key="11">
    <source>
    </source>
</evidence>
<name>ZEO1_YEAST</name>
<sequence>MSEIQNKAETAAQDVQQKLEETKESLQNKGQEVKEQAEASIDNLKNEATPEAEQVKKEEQNIADGVEQKKTEAANKVEETKKQASAAVSEKKETKKEGGFLKKLNRKIASIFN</sequence>
<reference key="1">
    <citation type="journal article" date="1997" name="Nature">
        <title>The nucleotide sequence of Saccharomyces cerevisiae chromosome XV.</title>
        <authorList>
            <person name="Dujon B."/>
            <person name="Albermann K."/>
            <person name="Aldea M."/>
            <person name="Alexandraki D."/>
            <person name="Ansorge W."/>
            <person name="Arino J."/>
            <person name="Benes V."/>
            <person name="Bohn C."/>
            <person name="Bolotin-Fukuhara M."/>
            <person name="Bordonne R."/>
            <person name="Boyer J."/>
            <person name="Camasses A."/>
            <person name="Casamayor A."/>
            <person name="Casas C."/>
            <person name="Cheret G."/>
            <person name="Cziepluch C."/>
            <person name="Daignan-Fornier B."/>
            <person name="Dang V.-D."/>
            <person name="de Haan M."/>
            <person name="Delius H."/>
            <person name="Durand P."/>
            <person name="Fairhead C."/>
            <person name="Feldmann H."/>
            <person name="Gaillon L."/>
            <person name="Galisson F."/>
            <person name="Gamo F.-J."/>
            <person name="Gancedo C."/>
            <person name="Goffeau A."/>
            <person name="Goulding S.E."/>
            <person name="Grivell L.A."/>
            <person name="Habbig B."/>
            <person name="Hand N.J."/>
            <person name="Hani J."/>
            <person name="Hattenhorst U."/>
            <person name="Hebling U."/>
            <person name="Hernando Y."/>
            <person name="Herrero E."/>
            <person name="Heumann K."/>
            <person name="Hiesel R."/>
            <person name="Hilger F."/>
            <person name="Hofmann B."/>
            <person name="Hollenberg C.P."/>
            <person name="Hughes B."/>
            <person name="Jauniaux J.-C."/>
            <person name="Kalogeropoulos A."/>
            <person name="Katsoulou C."/>
            <person name="Kordes E."/>
            <person name="Lafuente M.J."/>
            <person name="Landt O."/>
            <person name="Louis E.J."/>
            <person name="Maarse A.C."/>
            <person name="Madania A."/>
            <person name="Mannhaupt G."/>
            <person name="Marck C."/>
            <person name="Martin R.P."/>
            <person name="Mewes H.-W."/>
            <person name="Michaux G."/>
            <person name="Paces V."/>
            <person name="Parle-McDermott A.G."/>
            <person name="Pearson B.M."/>
            <person name="Perrin A."/>
            <person name="Pettersson B."/>
            <person name="Poch O."/>
            <person name="Pohl T.M."/>
            <person name="Poirey R."/>
            <person name="Portetelle D."/>
            <person name="Pujol A."/>
            <person name="Purnelle B."/>
            <person name="Ramezani Rad M."/>
            <person name="Rechmann S."/>
            <person name="Schwager C."/>
            <person name="Schweizer M."/>
            <person name="Sor F."/>
            <person name="Sterky F."/>
            <person name="Tarassov I.A."/>
            <person name="Teodoru C."/>
            <person name="Tettelin H."/>
            <person name="Thierry A."/>
            <person name="Tobiasch E."/>
            <person name="Tzermia M."/>
            <person name="Uhlen M."/>
            <person name="Unseld M."/>
            <person name="Valens M."/>
            <person name="Vandenbol M."/>
            <person name="Vetter I."/>
            <person name="Vlcek C."/>
            <person name="Voet M."/>
            <person name="Volckaert G."/>
            <person name="Voss H."/>
            <person name="Wambutt R."/>
            <person name="Wedler H."/>
            <person name="Wiemann S."/>
            <person name="Winsor B."/>
            <person name="Wolfe K.H."/>
            <person name="Zollner A."/>
            <person name="Zumstein E."/>
            <person name="Kleine K."/>
        </authorList>
    </citation>
    <scope>NUCLEOTIDE SEQUENCE [LARGE SCALE GENOMIC DNA]</scope>
    <source>
        <strain>ATCC 204508 / S288c</strain>
    </source>
</reference>
<reference key="2">
    <citation type="journal article" date="2014" name="G3 (Bethesda)">
        <title>The reference genome sequence of Saccharomyces cerevisiae: Then and now.</title>
        <authorList>
            <person name="Engel S.R."/>
            <person name="Dietrich F.S."/>
            <person name="Fisk D.G."/>
            <person name="Binkley G."/>
            <person name="Balakrishnan R."/>
            <person name="Costanzo M.C."/>
            <person name="Dwight S.S."/>
            <person name="Hitz B.C."/>
            <person name="Karra K."/>
            <person name="Nash R.S."/>
            <person name="Weng S."/>
            <person name="Wong E.D."/>
            <person name="Lloyd P."/>
            <person name="Skrzypek M.S."/>
            <person name="Miyasato S.R."/>
            <person name="Simison M."/>
            <person name="Cherry J.M."/>
        </authorList>
    </citation>
    <scope>GENOME REANNOTATION</scope>
    <source>
        <strain>ATCC 204508 / S288c</strain>
    </source>
</reference>
<reference key="3">
    <citation type="journal article" date="2007" name="Genome Res.">
        <title>Approaching a complete repository of sequence-verified protein-encoding clones for Saccharomyces cerevisiae.</title>
        <authorList>
            <person name="Hu Y."/>
            <person name="Rolfs A."/>
            <person name="Bhullar B."/>
            <person name="Murthy T.V.S."/>
            <person name="Zhu C."/>
            <person name="Berger M.F."/>
            <person name="Camargo A.A."/>
            <person name="Kelley F."/>
            <person name="McCarron S."/>
            <person name="Jepson D."/>
            <person name="Richardson A."/>
            <person name="Raphael J."/>
            <person name="Moreira D."/>
            <person name="Taycher E."/>
            <person name="Zuo D."/>
            <person name="Mohr S."/>
            <person name="Kane M.F."/>
            <person name="Williamson J."/>
            <person name="Simpson A.J.G."/>
            <person name="Bulyk M.L."/>
            <person name="Harlow E."/>
            <person name="Marsischky G."/>
            <person name="Kolodner R.D."/>
            <person name="LaBaer J."/>
        </authorList>
    </citation>
    <scope>NUCLEOTIDE SEQUENCE [GENOMIC DNA]</scope>
    <source>
        <strain>ATCC 204508 / S288c</strain>
    </source>
</reference>
<reference key="4">
    <citation type="submission" date="2005-05" db="UniProtKB">
        <authorList>
            <person name="Bienvenut W.V."/>
            <person name="Peters C."/>
        </authorList>
    </citation>
    <scope>PROTEIN SEQUENCE OF 2-18; 35-81; 83-91; 93-102 AND 107-113</scope>
    <scope>CLEAVAGE OF INITIATOR METHIONINE</scope>
    <scope>ACETYLATION AT SER-2</scope>
    <scope>IDENTIFICATION BY MASS SPECTROMETRY</scope>
</reference>
<reference key="5">
    <citation type="journal article" date="2003" name="Nat. Biotechnol.">
        <title>A proteomics approach to understanding protein ubiquitination.</title>
        <authorList>
            <person name="Peng J."/>
            <person name="Schwartz D."/>
            <person name="Elias J.E."/>
            <person name="Thoreen C.C."/>
            <person name="Cheng D."/>
            <person name="Marsischky G."/>
            <person name="Roelofs J."/>
            <person name="Finley D."/>
            <person name="Gygi S.P."/>
        </authorList>
    </citation>
    <scope>UBIQUITINATION [LARGE SCALE ANALYSIS] AT LYS-45 AND LYS-57</scope>
    <scope>IDENTIFICATION BY MASS SPECTROMETRY</scope>
    <source>
        <strain>SUB592</strain>
    </source>
</reference>
<reference key="6">
    <citation type="journal article" date="2003" name="Microbiology">
        <title>A synthetic analysis of the Saccharomyces cerevisiae stress sensor Mid2p, and identification of a Mid2p-interacting protein, Zeo1p, that modulates the PKC1-MPK1 cell integrity pathway.</title>
        <authorList>
            <person name="Green R."/>
            <person name="Lesage G."/>
            <person name="Sdicu A.-M."/>
            <person name="Menard P."/>
            <person name="Bussey H."/>
        </authorList>
    </citation>
    <scope>INTERACTION WITH MID2</scope>
    <scope>SUBCELLULAR LOCATION</scope>
    <scope>FUNCTION</scope>
</reference>
<reference key="7">
    <citation type="journal article" date="2005" name="Mol. Cell. Proteomics">
        <title>Quantitative phosphoproteomics applied to the yeast pheromone signaling pathway.</title>
        <authorList>
            <person name="Gruhler A."/>
            <person name="Olsen J.V."/>
            <person name="Mohammed S."/>
            <person name="Mortensen P."/>
            <person name="Faergeman N.J."/>
            <person name="Mann M."/>
            <person name="Jensen O.N."/>
        </authorList>
    </citation>
    <scope>ACETYLATION [LARGE SCALE ANALYSIS] AT SER-2</scope>
    <scope>PHOSPHORYLATION [LARGE SCALE ANALYSIS] AT SER-2 AND SER-25</scope>
    <scope>CLEAVAGE OF INITIATOR METHIONINE [LARGE SCALE ANALYSIS]</scope>
    <scope>IDENTIFICATION BY MASS SPECTROMETRY [LARGE SCALE ANALYSIS]</scope>
    <source>
        <strain>YAL6B</strain>
    </source>
</reference>
<reference key="8">
    <citation type="journal article" date="2007" name="J. Proteome Res.">
        <title>Large-scale phosphorylation analysis of alpha-factor-arrested Saccharomyces cerevisiae.</title>
        <authorList>
            <person name="Li X."/>
            <person name="Gerber S.A."/>
            <person name="Rudner A.D."/>
            <person name="Beausoleil S.A."/>
            <person name="Haas W."/>
            <person name="Villen J."/>
            <person name="Elias J.E."/>
            <person name="Gygi S.P."/>
        </authorList>
    </citation>
    <scope>PHOSPHORYLATION [LARGE SCALE ANALYSIS] AT SER-25; SER-40 AND THR-49</scope>
    <scope>IDENTIFICATION BY MASS SPECTROMETRY [LARGE SCALE ANALYSIS]</scope>
    <source>
        <strain>ADR376</strain>
    </source>
</reference>
<reference key="9">
    <citation type="journal article" date="2007" name="Mol. Cell. Proteomics">
        <title>Profiling phosphoproteins of yeast mitochondria reveals a role of phosphorylation in assembly of the ATP synthase.</title>
        <authorList>
            <person name="Reinders J."/>
            <person name="Wagner K."/>
            <person name="Zahedi R.P."/>
            <person name="Stojanovski D."/>
            <person name="Eyrich B."/>
            <person name="van der Laan M."/>
            <person name="Rehling P."/>
            <person name="Sickmann A."/>
            <person name="Pfanner N."/>
            <person name="Meisinger C."/>
        </authorList>
    </citation>
    <scope>PHOSPHORYLATION [LARGE SCALE ANALYSIS] AT SER-25; SER-40 AND THR-49</scope>
    <scope>IDENTIFICATION BY MASS SPECTROMETRY [LARGE SCALE ANALYSIS]</scope>
    <source>
        <strain>ATCC 76625 / YPH499</strain>
    </source>
</reference>
<reference key="10">
    <citation type="journal article" date="2007" name="Proc. Natl. Acad. Sci. U.S.A.">
        <title>Analysis of phosphorylation sites on proteins from Saccharomyces cerevisiae by electron transfer dissociation (ETD) mass spectrometry.</title>
        <authorList>
            <person name="Chi A."/>
            <person name="Huttenhower C."/>
            <person name="Geer L.Y."/>
            <person name="Coon J.J."/>
            <person name="Syka J.E.P."/>
            <person name="Bai D.L."/>
            <person name="Shabanowitz J."/>
            <person name="Burke D.J."/>
            <person name="Troyanskaya O.G."/>
            <person name="Hunt D.F."/>
        </authorList>
    </citation>
    <scope>PHOSPHORYLATION [LARGE SCALE ANALYSIS] AT SER-25 AND THR-49</scope>
    <scope>IDENTIFICATION BY MASS SPECTROMETRY [LARGE SCALE ANALYSIS]</scope>
</reference>
<reference key="11">
    <citation type="journal article" date="2008" name="Mol. Cell. Proteomics">
        <title>A multidimensional chromatography technology for in-depth phosphoproteome analysis.</title>
        <authorList>
            <person name="Albuquerque C.P."/>
            <person name="Smolka M.B."/>
            <person name="Payne S.H."/>
            <person name="Bafna V."/>
            <person name="Eng J."/>
            <person name="Zhou H."/>
        </authorList>
    </citation>
    <scope>PHOSPHORYLATION [LARGE SCALE ANALYSIS] AT SER-25; SER-40 AND THR-49</scope>
    <scope>IDENTIFICATION BY MASS SPECTROMETRY [LARGE SCALE ANALYSIS]</scope>
</reference>
<reference key="12">
    <citation type="journal article" date="2009" name="Science">
        <title>Global analysis of Cdk1 substrate phosphorylation sites provides insights into evolution.</title>
        <authorList>
            <person name="Holt L.J."/>
            <person name="Tuch B.B."/>
            <person name="Villen J."/>
            <person name="Johnson A.D."/>
            <person name="Gygi S.P."/>
            <person name="Morgan D.O."/>
        </authorList>
    </citation>
    <scope>PHOSPHORYLATION [LARGE SCALE ANALYSIS] AT SER-25; SER-40 AND THR-49</scope>
    <scope>IDENTIFICATION BY MASS SPECTROMETRY [LARGE SCALE ANALYSIS]</scope>
</reference>
<reference key="13">
    <citation type="journal article" date="2012" name="Proteomics">
        <title>Sites of ubiquitin attachment in Saccharomyces cerevisiae.</title>
        <authorList>
            <person name="Starita L.M."/>
            <person name="Lo R.S."/>
            <person name="Eng J.K."/>
            <person name="von Haller P.D."/>
            <person name="Fields S."/>
        </authorList>
    </citation>
    <scope>UBIQUITINATION [LARGE SCALE ANALYSIS] AT LYS-18; LYS-23; LYS-29; LYS-34; LYS-45; LYS-57 AND LYS-82</scope>
    <scope>IDENTIFICATION BY MASS SPECTROMETRY [LARGE SCALE ANALYSIS]</scope>
</reference>
<protein>
    <recommendedName>
        <fullName>Protein ZEO1</fullName>
    </recommendedName>
    <alternativeName>
        <fullName>Zeocin resistance protein 1</fullName>
    </alternativeName>
</protein>
<gene>
    <name type="primary">ZEO1</name>
    <name type="ordered locus">YOL109W</name>
    <name type="ORF">O0738</name>
</gene>
<accession>Q08245</accession>
<accession>D6W1V8</accession>
<dbReference type="EMBL" id="Z74851">
    <property type="protein sequence ID" value="CAA99128.1"/>
    <property type="molecule type" value="Genomic_DNA"/>
</dbReference>
<dbReference type="EMBL" id="AY693207">
    <property type="protein sequence ID" value="AAT93226.1"/>
    <property type="molecule type" value="Genomic_DNA"/>
</dbReference>
<dbReference type="EMBL" id="BK006948">
    <property type="protein sequence ID" value="DAA10674.1"/>
    <property type="molecule type" value="Genomic_DNA"/>
</dbReference>
<dbReference type="PIR" id="S66805">
    <property type="entry name" value="S66805"/>
</dbReference>
<dbReference type="RefSeq" id="NP_014532.1">
    <property type="nucleotide sequence ID" value="NM_001183363.1"/>
</dbReference>
<dbReference type="SMR" id="Q08245"/>
<dbReference type="BioGRID" id="34291">
    <property type="interactions" value="127"/>
</dbReference>
<dbReference type="DIP" id="DIP-4913N"/>
<dbReference type="FunCoup" id="Q08245">
    <property type="interactions" value="121"/>
</dbReference>
<dbReference type="IntAct" id="Q08245">
    <property type="interactions" value="26"/>
</dbReference>
<dbReference type="MINT" id="Q08245"/>
<dbReference type="STRING" id="4932.YOL109W"/>
<dbReference type="iPTMnet" id="Q08245"/>
<dbReference type="PaxDb" id="4932-YOL109W"/>
<dbReference type="PeptideAtlas" id="Q08245"/>
<dbReference type="TopDownProteomics" id="Q08245"/>
<dbReference type="EnsemblFungi" id="YOL109W_mRNA">
    <property type="protein sequence ID" value="YOL109W"/>
    <property type="gene ID" value="YOL109W"/>
</dbReference>
<dbReference type="GeneID" id="854040"/>
<dbReference type="KEGG" id="sce:YOL109W"/>
<dbReference type="AGR" id="SGD:S000005469"/>
<dbReference type="SGD" id="S000005469">
    <property type="gene designation" value="ZEO1"/>
</dbReference>
<dbReference type="VEuPathDB" id="FungiDB:YOL109W"/>
<dbReference type="HOGENOM" id="CLU_2135482_0_0_1"/>
<dbReference type="InParanoid" id="Q08245"/>
<dbReference type="OrthoDB" id="4054369at2759"/>
<dbReference type="BioCyc" id="YEAST:G3O-33506-MONOMER"/>
<dbReference type="BioGRID-ORCS" id="854040">
    <property type="hits" value="3 hits in 10 CRISPR screens"/>
</dbReference>
<dbReference type="ChiTaRS" id="ZEO1">
    <property type="organism name" value="yeast"/>
</dbReference>
<dbReference type="PRO" id="PR:Q08245"/>
<dbReference type="Proteomes" id="UP000002311">
    <property type="component" value="Chromosome XV"/>
</dbReference>
<dbReference type="RNAct" id="Q08245">
    <property type="molecule type" value="protein"/>
</dbReference>
<dbReference type="GO" id="GO:0005741">
    <property type="term" value="C:mitochondrial outer membrane"/>
    <property type="evidence" value="ECO:0007005"/>
    <property type="project" value="SGD"/>
</dbReference>
<dbReference type="GO" id="GO:0005739">
    <property type="term" value="C:mitochondrion"/>
    <property type="evidence" value="ECO:0007005"/>
    <property type="project" value="SGD"/>
</dbReference>
<dbReference type="GO" id="GO:0005886">
    <property type="term" value="C:plasma membrane"/>
    <property type="evidence" value="ECO:0000314"/>
    <property type="project" value="SGD"/>
</dbReference>
<dbReference type="GO" id="GO:0031505">
    <property type="term" value="P:fungal-type cell wall organization"/>
    <property type="evidence" value="ECO:0000315"/>
    <property type="project" value="SGD"/>
</dbReference>
<dbReference type="Gene3D" id="1.20.120.20">
    <property type="entry name" value="Apolipoprotein"/>
    <property type="match status" value="1"/>
</dbReference>
<dbReference type="SUPFAM" id="SSF58113">
    <property type="entry name" value="Apolipoprotein A-I"/>
    <property type="match status" value="1"/>
</dbReference>